<organism>
    <name type="scientific">Citrifermentans bemidjiense (strain ATCC BAA-1014 / DSM 16622 / JCM 12645 / Bem)</name>
    <name type="common">Geobacter bemidjiensis</name>
    <dbReference type="NCBI Taxonomy" id="404380"/>
    <lineage>
        <taxon>Bacteria</taxon>
        <taxon>Pseudomonadati</taxon>
        <taxon>Thermodesulfobacteriota</taxon>
        <taxon>Desulfuromonadia</taxon>
        <taxon>Geobacterales</taxon>
        <taxon>Geobacteraceae</taxon>
        <taxon>Citrifermentans</taxon>
    </lineage>
</organism>
<sequence length="312" mass="34109">MEDFHHISVLPDEVLQALSPRSGGVYVDGTLGGAGHAGLILTASAPDGQLIGFDRDEEAIAVARERLQVFGGRVRIIHRNFAGIAQALAEIGVDGIDGFVLDLGVSSHQLDRDERGFSFMHDAPLDMRMDRSSGQSAADLVNTLPEGELYRIISEYGEERWAKRVASFIVKARDERPIETTLQLVDVIKGSIPKAKWEERLHPATRTFQALRIAVNEELKSLEEGLEGLLSLLKQGGRGAVISFHSLEDRIVKEGFRAAATGCTCPKELPICICGRVPRFKLVTRKPITAGEAEVAANPRSRSAKLRVVEKI</sequence>
<accession>B5EBP3</accession>
<evidence type="ECO:0000255" key="1">
    <source>
        <dbReference type="HAMAP-Rule" id="MF_01007"/>
    </source>
</evidence>
<gene>
    <name evidence="1" type="primary">rsmH</name>
    <name type="synonym">mraW</name>
    <name type="ordered locus">Gbem_0483</name>
</gene>
<name>RSMH_CITBB</name>
<comment type="function">
    <text evidence="1">Specifically methylates the N4 position of cytidine in position 1402 (C1402) of 16S rRNA.</text>
</comment>
<comment type="catalytic activity">
    <reaction evidence="1">
        <text>cytidine(1402) in 16S rRNA + S-adenosyl-L-methionine = N(4)-methylcytidine(1402) in 16S rRNA + S-adenosyl-L-homocysteine + H(+)</text>
        <dbReference type="Rhea" id="RHEA:42928"/>
        <dbReference type="Rhea" id="RHEA-COMP:10286"/>
        <dbReference type="Rhea" id="RHEA-COMP:10287"/>
        <dbReference type="ChEBI" id="CHEBI:15378"/>
        <dbReference type="ChEBI" id="CHEBI:57856"/>
        <dbReference type="ChEBI" id="CHEBI:59789"/>
        <dbReference type="ChEBI" id="CHEBI:74506"/>
        <dbReference type="ChEBI" id="CHEBI:82748"/>
        <dbReference type="EC" id="2.1.1.199"/>
    </reaction>
</comment>
<comment type="subcellular location">
    <subcellularLocation>
        <location evidence="1">Cytoplasm</location>
    </subcellularLocation>
</comment>
<comment type="similarity">
    <text evidence="1">Belongs to the methyltransferase superfamily. RsmH family.</text>
</comment>
<dbReference type="EC" id="2.1.1.199" evidence="1"/>
<dbReference type="EMBL" id="CP001124">
    <property type="protein sequence ID" value="ACH37512.1"/>
    <property type="molecule type" value="Genomic_DNA"/>
</dbReference>
<dbReference type="RefSeq" id="WP_012528919.1">
    <property type="nucleotide sequence ID" value="NC_011146.1"/>
</dbReference>
<dbReference type="SMR" id="B5EBP3"/>
<dbReference type="STRING" id="404380.Gbem_0483"/>
<dbReference type="KEGG" id="gbm:Gbem_0483"/>
<dbReference type="eggNOG" id="COG0275">
    <property type="taxonomic scope" value="Bacteria"/>
</dbReference>
<dbReference type="HOGENOM" id="CLU_038422_2_0_7"/>
<dbReference type="OrthoDB" id="9806637at2"/>
<dbReference type="Proteomes" id="UP000008825">
    <property type="component" value="Chromosome"/>
</dbReference>
<dbReference type="GO" id="GO:0005737">
    <property type="term" value="C:cytoplasm"/>
    <property type="evidence" value="ECO:0007669"/>
    <property type="project" value="UniProtKB-SubCell"/>
</dbReference>
<dbReference type="GO" id="GO:0071424">
    <property type="term" value="F:rRNA (cytosine-N4-)-methyltransferase activity"/>
    <property type="evidence" value="ECO:0007669"/>
    <property type="project" value="UniProtKB-UniRule"/>
</dbReference>
<dbReference type="GO" id="GO:0070475">
    <property type="term" value="P:rRNA base methylation"/>
    <property type="evidence" value="ECO:0007669"/>
    <property type="project" value="UniProtKB-UniRule"/>
</dbReference>
<dbReference type="FunFam" id="1.10.150.170:FF:000001">
    <property type="entry name" value="Ribosomal RNA small subunit methyltransferase H"/>
    <property type="match status" value="1"/>
</dbReference>
<dbReference type="Gene3D" id="1.10.150.170">
    <property type="entry name" value="Putative methyltransferase TM0872, insert domain"/>
    <property type="match status" value="1"/>
</dbReference>
<dbReference type="Gene3D" id="3.40.50.150">
    <property type="entry name" value="Vaccinia Virus protein VP39"/>
    <property type="match status" value="1"/>
</dbReference>
<dbReference type="HAMAP" id="MF_01007">
    <property type="entry name" value="16SrRNA_methyltr_H"/>
    <property type="match status" value="1"/>
</dbReference>
<dbReference type="InterPro" id="IPR002903">
    <property type="entry name" value="RsmH"/>
</dbReference>
<dbReference type="InterPro" id="IPR023397">
    <property type="entry name" value="SAM-dep_MeTrfase_MraW_recog"/>
</dbReference>
<dbReference type="InterPro" id="IPR029063">
    <property type="entry name" value="SAM-dependent_MTases_sf"/>
</dbReference>
<dbReference type="NCBIfam" id="TIGR00006">
    <property type="entry name" value="16S rRNA (cytosine(1402)-N(4))-methyltransferase RsmH"/>
    <property type="match status" value="1"/>
</dbReference>
<dbReference type="PANTHER" id="PTHR11265:SF0">
    <property type="entry name" value="12S RRNA N4-METHYLCYTIDINE METHYLTRANSFERASE"/>
    <property type="match status" value="1"/>
</dbReference>
<dbReference type="PANTHER" id="PTHR11265">
    <property type="entry name" value="S-ADENOSYL-METHYLTRANSFERASE MRAW"/>
    <property type="match status" value="1"/>
</dbReference>
<dbReference type="Pfam" id="PF01795">
    <property type="entry name" value="Methyltransf_5"/>
    <property type="match status" value="1"/>
</dbReference>
<dbReference type="PIRSF" id="PIRSF004486">
    <property type="entry name" value="MraW"/>
    <property type="match status" value="1"/>
</dbReference>
<dbReference type="SUPFAM" id="SSF81799">
    <property type="entry name" value="Putative methyltransferase TM0872, insert domain"/>
    <property type="match status" value="1"/>
</dbReference>
<dbReference type="SUPFAM" id="SSF53335">
    <property type="entry name" value="S-adenosyl-L-methionine-dependent methyltransferases"/>
    <property type="match status" value="1"/>
</dbReference>
<feature type="chain" id="PRO_0000386909" description="Ribosomal RNA small subunit methyltransferase H">
    <location>
        <begin position="1"/>
        <end position="312"/>
    </location>
</feature>
<feature type="binding site" evidence="1">
    <location>
        <begin position="34"/>
        <end position="36"/>
    </location>
    <ligand>
        <name>S-adenosyl-L-methionine</name>
        <dbReference type="ChEBI" id="CHEBI:59789"/>
    </ligand>
</feature>
<feature type="binding site" evidence="1">
    <location>
        <position position="54"/>
    </location>
    <ligand>
        <name>S-adenosyl-L-methionine</name>
        <dbReference type="ChEBI" id="CHEBI:59789"/>
    </ligand>
</feature>
<feature type="binding site" evidence="1">
    <location>
        <position position="81"/>
    </location>
    <ligand>
        <name>S-adenosyl-L-methionine</name>
        <dbReference type="ChEBI" id="CHEBI:59789"/>
    </ligand>
</feature>
<feature type="binding site" evidence="1">
    <location>
        <position position="102"/>
    </location>
    <ligand>
        <name>S-adenosyl-L-methionine</name>
        <dbReference type="ChEBI" id="CHEBI:59789"/>
    </ligand>
</feature>
<feature type="binding site" evidence="1">
    <location>
        <position position="109"/>
    </location>
    <ligand>
        <name>S-adenosyl-L-methionine</name>
        <dbReference type="ChEBI" id="CHEBI:59789"/>
    </ligand>
</feature>
<proteinExistence type="inferred from homology"/>
<protein>
    <recommendedName>
        <fullName evidence="1">Ribosomal RNA small subunit methyltransferase H</fullName>
        <ecNumber evidence="1">2.1.1.199</ecNumber>
    </recommendedName>
    <alternativeName>
        <fullName evidence="1">16S rRNA m(4)C1402 methyltransferase</fullName>
    </alternativeName>
    <alternativeName>
        <fullName evidence="1">rRNA (cytosine-N(4)-)-methyltransferase RsmH</fullName>
    </alternativeName>
</protein>
<keyword id="KW-0963">Cytoplasm</keyword>
<keyword id="KW-0489">Methyltransferase</keyword>
<keyword id="KW-1185">Reference proteome</keyword>
<keyword id="KW-0698">rRNA processing</keyword>
<keyword id="KW-0949">S-adenosyl-L-methionine</keyword>
<keyword id="KW-0808">Transferase</keyword>
<reference key="1">
    <citation type="submission" date="2008-07" db="EMBL/GenBank/DDBJ databases">
        <title>Complete sequence of Geobacter bemidjiensis BEM.</title>
        <authorList>
            <consortium name="US DOE Joint Genome Institute"/>
            <person name="Lucas S."/>
            <person name="Copeland A."/>
            <person name="Lapidus A."/>
            <person name="Glavina del Rio T."/>
            <person name="Dalin E."/>
            <person name="Tice H."/>
            <person name="Bruce D."/>
            <person name="Goodwin L."/>
            <person name="Pitluck S."/>
            <person name="Kiss H."/>
            <person name="Brettin T."/>
            <person name="Detter J.C."/>
            <person name="Han C."/>
            <person name="Kuske C.R."/>
            <person name="Schmutz J."/>
            <person name="Larimer F."/>
            <person name="Land M."/>
            <person name="Hauser L."/>
            <person name="Kyrpides N."/>
            <person name="Lykidis A."/>
            <person name="Lovley D."/>
            <person name="Richardson P."/>
        </authorList>
    </citation>
    <scope>NUCLEOTIDE SEQUENCE [LARGE SCALE GENOMIC DNA]</scope>
    <source>
        <strain>ATCC BAA-1014 / DSM 16622 / JCM 12645 / Bem</strain>
    </source>
</reference>